<feature type="chain" id="PRO_0000168825" description="Uncharacterized protein YceQ">
    <location>
        <begin position="1"/>
        <end position="106"/>
    </location>
</feature>
<name>YCEQ_ECOLI</name>
<keyword id="KW-1185">Reference proteome</keyword>
<dbReference type="EMBL" id="U00096">
    <property type="protein sequence ID" value="AAC74169.2"/>
    <property type="molecule type" value="Genomic_DNA"/>
</dbReference>
<dbReference type="EMBL" id="AP009048">
    <property type="protein sequence ID" value="BAE76373.1"/>
    <property type="molecule type" value="Genomic_DNA"/>
</dbReference>
<dbReference type="PIR" id="B64852">
    <property type="entry name" value="B64852"/>
</dbReference>
<dbReference type="RefSeq" id="NP_415603.2">
    <property type="nucleotide sequence ID" value="NC_000913.3"/>
</dbReference>
<dbReference type="DIP" id="DIP-28073N"/>
<dbReference type="FunCoup" id="P62066">
    <property type="interactions" value="237"/>
</dbReference>
<dbReference type="IntAct" id="P62066">
    <property type="interactions" value="1"/>
</dbReference>
<dbReference type="STRING" id="511145.b1085"/>
<dbReference type="PaxDb" id="511145-b1085"/>
<dbReference type="EnsemblBacteria" id="AAC74169">
    <property type="protein sequence ID" value="AAC74169"/>
    <property type="gene ID" value="b1085"/>
</dbReference>
<dbReference type="GeneID" id="945640"/>
<dbReference type="KEGG" id="ecj:JW5154"/>
<dbReference type="KEGG" id="eco:b1085"/>
<dbReference type="KEGG" id="ecoc:C3026_06570"/>
<dbReference type="PATRIC" id="fig|83333.103.peg.1873"/>
<dbReference type="EchoBASE" id="EB4308"/>
<dbReference type="eggNOG" id="ENOG5033UU4">
    <property type="taxonomic scope" value="Bacteria"/>
</dbReference>
<dbReference type="HOGENOM" id="CLU_163229_0_0_6"/>
<dbReference type="InParanoid" id="P62066"/>
<dbReference type="OMA" id="CXPCYSK"/>
<dbReference type="BioCyc" id="EcoCyc:G6563-MONOMER"/>
<dbReference type="PRO" id="PR:P62066"/>
<dbReference type="Proteomes" id="UP000000625">
    <property type="component" value="Chromosome"/>
</dbReference>
<dbReference type="AntiFam" id="ANF00070">
    <property type="entry name" value="Spurious family"/>
</dbReference>
<gene>
    <name type="primary">yceQ</name>
    <name type="ordered locus">b1085</name>
    <name type="ordered locus">JW5154</name>
</gene>
<sequence length="106" mass="12100">MSVARFSCGKTAQLSKKQTGYYSPEIFPSTGKDCNPQPANCLKDQYVLRHCCVDDRSGKMGYSVKFLVLTRMDTETASLFHCKPCYSKMTFTIYHPLTHSFFTSCW</sequence>
<proteinExistence type="predicted"/>
<reference key="1">
    <citation type="journal article" date="1997" name="Science">
        <title>The complete genome sequence of Escherichia coli K-12.</title>
        <authorList>
            <person name="Blattner F.R."/>
            <person name="Plunkett G. III"/>
            <person name="Bloch C.A."/>
            <person name="Perna N.T."/>
            <person name="Burland V."/>
            <person name="Riley M."/>
            <person name="Collado-Vides J."/>
            <person name="Glasner J.D."/>
            <person name="Rode C.K."/>
            <person name="Mayhew G.F."/>
            <person name="Gregor J."/>
            <person name="Davis N.W."/>
            <person name="Kirkpatrick H.A."/>
            <person name="Goeden M.A."/>
            <person name="Rose D.J."/>
            <person name="Mau B."/>
            <person name="Shao Y."/>
        </authorList>
    </citation>
    <scope>NUCLEOTIDE SEQUENCE [LARGE SCALE GENOMIC DNA]</scope>
    <source>
        <strain>K12 / MG1655 / ATCC 47076</strain>
    </source>
</reference>
<reference key="2">
    <citation type="journal article" date="2006" name="Mol. Syst. Biol.">
        <title>Highly accurate genome sequences of Escherichia coli K-12 strains MG1655 and W3110.</title>
        <authorList>
            <person name="Hayashi K."/>
            <person name="Morooka N."/>
            <person name="Yamamoto Y."/>
            <person name="Fujita K."/>
            <person name="Isono K."/>
            <person name="Choi S."/>
            <person name="Ohtsubo E."/>
            <person name="Baba T."/>
            <person name="Wanner B.L."/>
            <person name="Mori H."/>
            <person name="Horiuchi T."/>
        </authorList>
    </citation>
    <scope>NUCLEOTIDE SEQUENCE [LARGE SCALE GENOMIC DNA]</scope>
    <source>
        <strain>K12 / W3110 / ATCC 27325 / DSM 5911</strain>
    </source>
</reference>
<organism>
    <name type="scientific">Escherichia coli (strain K12)</name>
    <dbReference type="NCBI Taxonomy" id="83333"/>
    <lineage>
        <taxon>Bacteria</taxon>
        <taxon>Pseudomonadati</taxon>
        <taxon>Pseudomonadota</taxon>
        <taxon>Gammaproteobacteria</taxon>
        <taxon>Enterobacterales</taxon>
        <taxon>Enterobacteriaceae</taxon>
        <taxon>Escherichia</taxon>
    </lineage>
</organism>
<accession>P62066</accession>
<accession>P75943</accession>
<accession>Q2MBI3</accession>
<protein>
    <recommendedName>
        <fullName>Uncharacterized protein YceQ</fullName>
    </recommendedName>
</protein>